<keyword id="KW-1015">Disulfide bond</keyword>
<keyword id="KW-0378">Hydrolase</keyword>
<keyword id="KW-0645">Protease</keyword>
<keyword id="KW-0964">Secreted</keyword>
<keyword id="KW-0720">Serine protease</keyword>
<keyword id="KW-0732">Signal</keyword>
<keyword id="KW-0865">Zymogen</keyword>
<accession>P35048</accession>
<dbReference type="EC" id="3.4.21.4"/>
<dbReference type="EMBL" id="L08428">
    <property type="protein sequence ID" value="AAA18530.2"/>
    <property type="molecule type" value="mRNA"/>
</dbReference>
<dbReference type="SMR" id="P35048"/>
<dbReference type="GO" id="GO:0005576">
    <property type="term" value="C:extracellular region"/>
    <property type="evidence" value="ECO:0007669"/>
    <property type="project" value="UniProtKB-SubCell"/>
</dbReference>
<dbReference type="GO" id="GO:0004252">
    <property type="term" value="F:serine-type endopeptidase activity"/>
    <property type="evidence" value="ECO:0007669"/>
    <property type="project" value="UniProtKB-EC"/>
</dbReference>
<dbReference type="GO" id="GO:0006508">
    <property type="term" value="P:proteolysis"/>
    <property type="evidence" value="ECO:0007669"/>
    <property type="project" value="UniProtKB-KW"/>
</dbReference>
<dbReference type="CDD" id="cd00190">
    <property type="entry name" value="Tryp_SPc"/>
    <property type="match status" value="1"/>
</dbReference>
<dbReference type="FunFam" id="2.40.10.10:FF:000077">
    <property type="entry name" value="Predicted protein"/>
    <property type="match status" value="1"/>
</dbReference>
<dbReference type="Gene3D" id="2.40.10.10">
    <property type="entry name" value="Trypsin-like serine proteases"/>
    <property type="match status" value="1"/>
</dbReference>
<dbReference type="InterPro" id="IPR009003">
    <property type="entry name" value="Peptidase_S1_PA"/>
</dbReference>
<dbReference type="InterPro" id="IPR043504">
    <property type="entry name" value="Peptidase_S1_PA_chymotrypsin"/>
</dbReference>
<dbReference type="InterPro" id="IPR001314">
    <property type="entry name" value="Peptidase_S1A"/>
</dbReference>
<dbReference type="InterPro" id="IPR001254">
    <property type="entry name" value="Trypsin_dom"/>
</dbReference>
<dbReference type="InterPro" id="IPR018114">
    <property type="entry name" value="TRYPSIN_HIS"/>
</dbReference>
<dbReference type="InterPro" id="IPR033116">
    <property type="entry name" value="TRYPSIN_SER"/>
</dbReference>
<dbReference type="PANTHER" id="PTHR24252">
    <property type="entry name" value="ACROSIN-RELATED"/>
    <property type="match status" value="1"/>
</dbReference>
<dbReference type="PANTHER" id="PTHR24252:SF7">
    <property type="entry name" value="HYALIN"/>
    <property type="match status" value="1"/>
</dbReference>
<dbReference type="Pfam" id="PF00089">
    <property type="entry name" value="Trypsin"/>
    <property type="match status" value="1"/>
</dbReference>
<dbReference type="PRINTS" id="PR00722">
    <property type="entry name" value="CHYMOTRYPSIN"/>
</dbReference>
<dbReference type="SMART" id="SM00020">
    <property type="entry name" value="Tryp_SPc"/>
    <property type="match status" value="1"/>
</dbReference>
<dbReference type="SUPFAM" id="SSF50494">
    <property type="entry name" value="Trypsin-like serine proteases"/>
    <property type="match status" value="1"/>
</dbReference>
<dbReference type="PROSITE" id="PS50240">
    <property type="entry name" value="TRYPSIN_DOM"/>
    <property type="match status" value="1"/>
</dbReference>
<dbReference type="PROSITE" id="PS00134">
    <property type="entry name" value="TRYPSIN_HIS"/>
    <property type="match status" value="1"/>
</dbReference>
<dbReference type="PROSITE" id="PS00135">
    <property type="entry name" value="TRYPSIN_SER"/>
    <property type="match status" value="1"/>
</dbReference>
<evidence type="ECO:0000250" key="1"/>
<evidence type="ECO:0000255" key="2"/>
<evidence type="ECO:0000255" key="3">
    <source>
        <dbReference type="PROSITE-ProRule" id="PRU00274"/>
    </source>
</evidence>
<protein>
    <recommendedName>
        <fullName>Trypsin</fullName>
        <ecNumber>3.4.21.4</ecNumber>
    </recommendedName>
</protein>
<feature type="signal peptide" evidence="2">
    <location>
        <begin position="1" status="less than"/>
        <end position="21"/>
    </location>
</feature>
<feature type="propeptide" id="PRO_0000028299" description="Activation peptide">
    <location>
        <begin position="22"/>
        <end position="30"/>
    </location>
</feature>
<feature type="chain" id="PRO_0000028300" description="Trypsin">
    <location>
        <begin position="31"/>
        <end position="247"/>
    </location>
</feature>
<feature type="domain" description="Peptidase S1" evidence="3">
    <location>
        <begin position="31"/>
        <end position="247" status="greater than"/>
    </location>
</feature>
<feature type="active site" description="Charge relay system" evidence="1">
    <location>
        <position position="76"/>
    </location>
</feature>
<feature type="active site" description="Charge relay system" evidence="1">
    <location>
        <position position="120"/>
    </location>
</feature>
<feature type="active site" description="Charge relay system" evidence="1">
    <location>
        <position position="216"/>
    </location>
</feature>
<feature type="site" description="Required for specificity" evidence="1">
    <location>
        <position position="210"/>
    </location>
</feature>
<feature type="disulfide bond" evidence="3">
    <location>
        <begin position="61"/>
        <end position="77"/>
    </location>
</feature>
<feature type="disulfide bond" evidence="3">
    <location>
        <begin position="185"/>
        <end position="201"/>
    </location>
</feature>
<feature type="disulfide bond" evidence="3">
    <location>
        <begin position="212"/>
        <end position="236"/>
    </location>
</feature>
<feature type="non-terminal residue">
    <location>
        <position position="1"/>
    </location>
</feature>
<feature type="non-terminal residue">
    <location>
        <position position="247"/>
    </location>
</feature>
<name>TRYP_SIMVI</name>
<sequence>LTTVISYFALVAFALVGVSYATPKASINGRIVGGEMTDISLIPYQVSVQTAISSYGFIHHCGGSIISPRWVVTAAHCAQKTNSAYQVYTGSSNKVEGGQAYRVKTIINHPLYDEETTDYDVALLELAEPIVMNYKTAAIELAEVGEEVETDAMAIVSGWGDTKNFGEEPNMLRSAEVPIFDQELCAYLNANHGVVTERMICAGYLAGGRDSCQGDSGGPLAVDGKLVGIVSWGVGCAQSNFPGVYGI</sequence>
<proteinExistence type="evidence at transcript level"/>
<comment type="catalytic activity">
    <reaction>
        <text>Preferential cleavage: Arg-|-Xaa, Lys-|-Xaa.</text>
        <dbReference type="EC" id="3.4.21.4"/>
    </reaction>
</comment>
<comment type="subcellular location">
    <subcellularLocation>
        <location>Secreted</location>
        <location>Extracellular space</location>
    </subcellularLocation>
</comment>
<comment type="tissue specificity">
    <text>Midgut.</text>
</comment>
<comment type="similarity">
    <text evidence="3">Belongs to the peptidase S1 family.</text>
</comment>
<organism>
    <name type="scientific">Simulium vittatum</name>
    <name type="common">Striped black fly</name>
    <dbReference type="NCBI Taxonomy" id="7192"/>
    <lineage>
        <taxon>Eukaryota</taxon>
        <taxon>Metazoa</taxon>
        <taxon>Ecdysozoa</taxon>
        <taxon>Arthropoda</taxon>
        <taxon>Hexapoda</taxon>
        <taxon>Insecta</taxon>
        <taxon>Pterygota</taxon>
        <taxon>Neoptera</taxon>
        <taxon>Endopterygota</taxon>
        <taxon>Diptera</taxon>
        <taxon>Nematocera</taxon>
        <taxon>Chironomoidea</taxon>
        <taxon>Simuliidae</taxon>
        <taxon>Simulium</taxon>
    </lineage>
</organism>
<reference key="1">
    <citation type="journal article" date="1993" name="Insect Mol. Biol.">
        <title>Gut-specific genes from the black fly Simulium vittatum encoding trypsin-like and carboxypeptidase-like proteins.</title>
        <authorList>
            <person name="Ramos A."/>
            <person name="Mahowald A."/>
            <person name="Jacobs-Lorena M."/>
        </authorList>
    </citation>
    <scope>NUCLEOTIDE SEQUENCE [MRNA]</scope>
    <source>
        <tissue>Gut</tissue>
    </source>
</reference>